<gene>
    <name evidence="1" type="primary">cyoE</name>
    <name type="ordered locus">XF_1360</name>
</gene>
<accession>Q9PDL9</accession>
<dbReference type="EC" id="2.5.1.141" evidence="1"/>
<dbReference type="EMBL" id="AE003849">
    <property type="protein sequence ID" value="AAF84169.1"/>
    <property type="status" value="ALT_INIT"/>
    <property type="molecule type" value="Genomic_DNA"/>
</dbReference>
<dbReference type="PIR" id="G82692">
    <property type="entry name" value="G82692"/>
</dbReference>
<dbReference type="RefSeq" id="WP_031337923.1">
    <property type="nucleotide sequence ID" value="NC_002488.3"/>
</dbReference>
<dbReference type="SMR" id="Q9PDL9"/>
<dbReference type="STRING" id="160492.XF_1360"/>
<dbReference type="KEGG" id="xfa:XF_1360"/>
<dbReference type="eggNOG" id="COG0109">
    <property type="taxonomic scope" value="Bacteria"/>
</dbReference>
<dbReference type="HOGENOM" id="CLU_029631_0_2_6"/>
<dbReference type="UniPathway" id="UPA00834">
    <property type="reaction ID" value="UER00712"/>
</dbReference>
<dbReference type="Proteomes" id="UP000000812">
    <property type="component" value="Chromosome"/>
</dbReference>
<dbReference type="GO" id="GO:0005886">
    <property type="term" value="C:plasma membrane"/>
    <property type="evidence" value="ECO:0007669"/>
    <property type="project" value="UniProtKB-SubCell"/>
</dbReference>
<dbReference type="GO" id="GO:0008495">
    <property type="term" value="F:protoheme IX farnesyltransferase activity"/>
    <property type="evidence" value="ECO:0007669"/>
    <property type="project" value="UniProtKB-UniRule"/>
</dbReference>
<dbReference type="GO" id="GO:0048034">
    <property type="term" value="P:heme O biosynthetic process"/>
    <property type="evidence" value="ECO:0007669"/>
    <property type="project" value="UniProtKB-UniRule"/>
</dbReference>
<dbReference type="CDD" id="cd13957">
    <property type="entry name" value="PT_UbiA_Cox10"/>
    <property type="match status" value="1"/>
</dbReference>
<dbReference type="FunFam" id="1.10.357.140:FF:000001">
    <property type="entry name" value="Protoheme IX farnesyltransferase"/>
    <property type="match status" value="1"/>
</dbReference>
<dbReference type="Gene3D" id="1.10.357.140">
    <property type="entry name" value="UbiA prenyltransferase"/>
    <property type="match status" value="1"/>
</dbReference>
<dbReference type="HAMAP" id="MF_00154">
    <property type="entry name" value="CyoE_CtaB"/>
    <property type="match status" value="1"/>
</dbReference>
<dbReference type="InterPro" id="IPR006369">
    <property type="entry name" value="Protohaem_IX_farnesylTrfase"/>
</dbReference>
<dbReference type="InterPro" id="IPR000537">
    <property type="entry name" value="UbiA_prenyltransferase"/>
</dbReference>
<dbReference type="InterPro" id="IPR030470">
    <property type="entry name" value="UbiA_prenylTrfase_CS"/>
</dbReference>
<dbReference type="InterPro" id="IPR044878">
    <property type="entry name" value="UbiA_sf"/>
</dbReference>
<dbReference type="NCBIfam" id="TIGR01473">
    <property type="entry name" value="cyoE_ctaB"/>
    <property type="match status" value="1"/>
</dbReference>
<dbReference type="NCBIfam" id="NF003349">
    <property type="entry name" value="PRK04375.1-2"/>
    <property type="match status" value="1"/>
</dbReference>
<dbReference type="PANTHER" id="PTHR43448:SF7">
    <property type="entry name" value="4-HYDROXYBENZOATE SOLANESYLTRANSFERASE"/>
    <property type="match status" value="1"/>
</dbReference>
<dbReference type="PANTHER" id="PTHR43448">
    <property type="entry name" value="PROTOHEME IX FARNESYLTRANSFERASE, MITOCHONDRIAL"/>
    <property type="match status" value="1"/>
</dbReference>
<dbReference type="Pfam" id="PF01040">
    <property type="entry name" value="UbiA"/>
    <property type="match status" value="1"/>
</dbReference>
<dbReference type="PROSITE" id="PS00943">
    <property type="entry name" value="UBIA"/>
    <property type="match status" value="1"/>
</dbReference>
<reference key="1">
    <citation type="journal article" date="2000" name="Nature">
        <title>The genome sequence of the plant pathogen Xylella fastidiosa.</title>
        <authorList>
            <person name="Simpson A.J.G."/>
            <person name="Reinach F.C."/>
            <person name="Arruda P."/>
            <person name="Abreu F.A."/>
            <person name="Acencio M."/>
            <person name="Alvarenga R."/>
            <person name="Alves L.M.C."/>
            <person name="Araya J.E."/>
            <person name="Baia G.S."/>
            <person name="Baptista C.S."/>
            <person name="Barros M.H."/>
            <person name="Bonaccorsi E.D."/>
            <person name="Bordin S."/>
            <person name="Bove J.M."/>
            <person name="Briones M.R.S."/>
            <person name="Bueno M.R.P."/>
            <person name="Camargo A.A."/>
            <person name="Camargo L.E.A."/>
            <person name="Carraro D.M."/>
            <person name="Carrer H."/>
            <person name="Colauto N.B."/>
            <person name="Colombo C."/>
            <person name="Costa F.F."/>
            <person name="Costa M.C.R."/>
            <person name="Costa-Neto C.M."/>
            <person name="Coutinho L.L."/>
            <person name="Cristofani M."/>
            <person name="Dias-Neto E."/>
            <person name="Docena C."/>
            <person name="El-Dorry H."/>
            <person name="Facincani A.P."/>
            <person name="Ferreira A.J.S."/>
            <person name="Ferreira V.C.A."/>
            <person name="Ferro J.A."/>
            <person name="Fraga J.S."/>
            <person name="Franca S.C."/>
            <person name="Franco M.C."/>
            <person name="Frohme M."/>
            <person name="Furlan L.R."/>
            <person name="Garnier M."/>
            <person name="Goldman G.H."/>
            <person name="Goldman M.H.S."/>
            <person name="Gomes S.L."/>
            <person name="Gruber A."/>
            <person name="Ho P.L."/>
            <person name="Hoheisel J.D."/>
            <person name="Junqueira M.L."/>
            <person name="Kemper E.L."/>
            <person name="Kitajima J.P."/>
            <person name="Krieger J.E."/>
            <person name="Kuramae E.E."/>
            <person name="Laigret F."/>
            <person name="Lambais M.R."/>
            <person name="Leite L.C.C."/>
            <person name="Lemos E.G.M."/>
            <person name="Lemos M.V.F."/>
            <person name="Lopes S.A."/>
            <person name="Lopes C.R."/>
            <person name="Machado J.A."/>
            <person name="Machado M.A."/>
            <person name="Madeira A.M.B.N."/>
            <person name="Madeira H.M.F."/>
            <person name="Marino C.L."/>
            <person name="Marques M.V."/>
            <person name="Martins E.A.L."/>
            <person name="Martins E.M.F."/>
            <person name="Matsukuma A.Y."/>
            <person name="Menck C.F.M."/>
            <person name="Miracca E.C."/>
            <person name="Miyaki C.Y."/>
            <person name="Monteiro-Vitorello C.B."/>
            <person name="Moon D.H."/>
            <person name="Nagai M.A."/>
            <person name="Nascimento A.L.T.O."/>
            <person name="Netto L.E.S."/>
            <person name="Nhani A. Jr."/>
            <person name="Nobrega F.G."/>
            <person name="Nunes L.R."/>
            <person name="Oliveira M.A."/>
            <person name="de Oliveira M.C."/>
            <person name="de Oliveira R.C."/>
            <person name="Palmieri D.A."/>
            <person name="Paris A."/>
            <person name="Peixoto B.R."/>
            <person name="Pereira G.A.G."/>
            <person name="Pereira H.A. Jr."/>
            <person name="Pesquero J.B."/>
            <person name="Quaggio R.B."/>
            <person name="Roberto P.G."/>
            <person name="Rodrigues V."/>
            <person name="de Rosa A.J.M."/>
            <person name="de Rosa V.E. Jr."/>
            <person name="de Sa R.G."/>
            <person name="Santelli R.V."/>
            <person name="Sawasaki H.E."/>
            <person name="da Silva A.C.R."/>
            <person name="da Silva A.M."/>
            <person name="da Silva F.R."/>
            <person name="Silva W.A. Jr."/>
            <person name="da Silveira J.F."/>
            <person name="Silvestri M.L.Z."/>
            <person name="Siqueira W.J."/>
            <person name="de Souza A.A."/>
            <person name="de Souza A.P."/>
            <person name="Terenzi M.F."/>
            <person name="Truffi D."/>
            <person name="Tsai S.M."/>
            <person name="Tsuhako M.H."/>
            <person name="Vallada H."/>
            <person name="Van Sluys M.A."/>
            <person name="Verjovski-Almeida S."/>
            <person name="Vettore A.L."/>
            <person name="Zago M.A."/>
            <person name="Zatz M."/>
            <person name="Meidanis J."/>
            <person name="Setubal J.C."/>
        </authorList>
    </citation>
    <scope>NUCLEOTIDE SEQUENCE [LARGE SCALE GENOMIC DNA]</scope>
    <source>
        <strain>9a5c</strain>
    </source>
</reference>
<organism>
    <name type="scientific">Xylella fastidiosa (strain 9a5c)</name>
    <dbReference type="NCBI Taxonomy" id="160492"/>
    <lineage>
        <taxon>Bacteria</taxon>
        <taxon>Pseudomonadati</taxon>
        <taxon>Pseudomonadota</taxon>
        <taxon>Gammaproteobacteria</taxon>
        <taxon>Lysobacterales</taxon>
        <taxon>Lysobacteraceae</taxon>
        <taxon>Xylella</taxon>
    </lineage>
</organism>
<protein>
    <recommendedName>
        <fullName evidence="1">Protoheme IX farnesyltransferase</fullName>
        <ecNumber evidence="1">2.5.1.141</ecNumber>
    </recommendedName>
    <alternativeName>
        <fullName evidence="1">Heme B farnesyltransferase</fullName>
    </alternativeName>
    <alternativeName>
        <fullName evidence="1">Heme O synthase</fullName>
    </alternativeName>
</protein>
<sequence length="301" mass="32999">MAARLRDYWDLTKPKVVALIVFTALVGMFLAIPGIPSVVQIQSGALGFLGIWLAAAAAAAINQLLDAKIDAQMARTSWRPLVVGKVRPVQVLVFAGVLITLSMTILTLGVNLITAVLTFTSLIGYAVIYTVYLKRMTSQNIVIGGLAGAMPPMLGWAAVTGLSTAADWINASLLVAIIFVWTPPHFWALAIFRRADYAKASIPMLPVTHGVQHTSRQILLYTVILSVVTLLPVATGMSGVFYLGAALVLDAVFLWYAWRLLDPPDELFAMKTFGYSIVYLMALFAFLMFDHWLRLADFYWN</sequence>
<feature type="chain" id="PRO_0000326975" description="Protoheme IX farnesyltransferase">
    <location>
        <begin position="1"/>
        <end position="301"/>
    </location>
</feature>
<feature type="transmembrane region" description="Helical" evidence="1">
    <location>
        <begin position="16"/>
        <end position="36"/>
    </location>
</feature>
<feature type="transmembrane region" description="Helical" evidence="1">
    <location>
        <begin position="41"/>
        <end position="61"/>
    </location>
</feature>
<feature type="transmembrane region" description="Helical" evidence="1">
    <location>
        <begin position="93"/>
        <end position="113"/>
    </location>
</feature>
<feature type="transmembrane region" description="Helical" evidence="1">
    <location>
        <begin position="114"/>
        <end position="134"/>
    </location>
</feature>
<feature type="transmembrane region" description="Helical" evidence="1">
    <location>
        <begin position="141"/>
        <end position="161"/>
    </location>
</feature>
<feature type="transmembrane region" description="Helical" evidence="1">
    <location>
        <begin position="172"/>
        <end position="192"/>
    </location>
</feature>
<feature type="transmembrane region" description="Helical" evidence="1">
    <location>
        <begin position="217"/>
        <end position="237"/>
    </location>
</feature>
<feature type="transmembrane region" description="Helical" evidence="1">
    <location>
        <begin position="238"/>
        <end position="258"/>
    </location>
</feature>
<feature type="transmembrane region" description="Helical" evidence="1">
    <location>
        <begin position="273"/>
        <end position="293"/>
    </location>
</feature>
<name>CYOE_XYLFA</name>
<comment type="function">
    <text evidence="1">Converts heme B (protoheme IX) to heme O by substitution of the vinyl group on carbon 2 of heme B porphyrin ring with a hydroxyethyl farnesyl side group.</text>
</comment>
<comment type="catalytic activity">
    <reaction evidence="1">
        <text>heme b + (2E,6E)-farnesyl diphosphate + H2O = Fe(II)-heme o + diphosphate</text>
        <dbReference type="Rhea" id="RHEA:28070"/>
        <dbReference type="ChEBI" id="CHEBI:15377"/>
        <dbReference type="ChEBI" id="CHEBI:33019"/>
        <dbReference type="ChEBI" id="CHEBI:60344"/>
        <dbReference type="ChEBI" id="CHEBI:60530"/>
        <dbReference type="ChEBI" id="CHEBI:175763"/>
        <dbReference type="EC" id="2.5.1.141"/>
    </reaction>
</comment>
<comment type="pathway">
    <text evidence="1">Porphyrin-containing compound metabolism; heme O biosynthesis; heme O from protoheme: step 1/1.</text>
</comment>
<comment type="subcellular location">
    <subcellularLocation>
        <location evidence="1">Cell inner membrane</location>
        <topology evidence="1">Multi-pass membrane protein</topology>
    </subcellularLocation>
</comment>
<comment type="miscellaneous">
    <text evidence="1">Carbon 2 of the heme B porphyrin ring is defined according to the Fischer nomenclature.</text>
</comment>
<comment type="similarity">
    <text evidence="1">Belongs to the UbiA prenyltransferase family. Protoheme IX farnesyltransferase subfamily.</text>
</comment>
<comment type="sequence caution" evidence="2">
    <conflict type="erroneous initiation">
        <sequence resource="EMBL-CDS" id="AAF84169"/>
    </conflict>
</comment>
<keyword id="KW-0997">Cell inner membrane</keyword>
<keyword id="KW-1003">Cell membrane</keyword>
<keyword id="KW-0350">Heme biosynthesis</keyword>
<keyword id="KW-0472">Membrane</keyword>
<keyword id="KW-0808">Transferase</keyword>
<keyword id="KW-0812">Transmembrane</keyword>
<keyword id="KW-1133">Transmembrane helix</keyword>
<evidence type="ECO:0000255" key="1">
    <source>
        <dbReference type="HAMAP-Rule" id="MF_00154"/>
    </source>
</evidence>
<evidence type="ECO:0000305" key="2"/>
<proteinExistence type="inferred from homology"/>